<dbReference type="EC" id="2.4.99.28" evidence="1"/>
<dbReference type="EMBL" id="AE000511">
    <property type="protein sequence ID" value="AAD07794.1"/>
    <property type="molecule type" value="Genomic_DNA"/>
</dbReference>
<dbReference type="PIR" id="G64612">
    <property type="entry name" value="G64612"/>
</dbReference>
<dbReference type="RefSeq" id="NP_207537.1">
    <property type="nucleotide sequence ID" value="NC_000915.1"/>
</dbReference>
<dbReference type="RefSeq" id="WP_010875539.1">
    <property type="nucleotide sequence ID" value="NC_018939.1"/>
</dbReference>
<dbReference type="SMR" id="P56098"/>
<dbReference type="FunCoup" id="P56098">
    <property type="interactions" value="196"/>
</dbReference>
<dbReference type="STRING" id="85962.HP_0743"/>
<dbReference type="PaxDb" id="85962-C694_03820"/>
<dbReference type="EnsemblBacteria" id="AAD07794">
    <property type="protein sequence ID" value="AAD07794"/>
    <property type="gene ID" value="HP_0743"/>
</dbReference>
<dbReference type="KEGG" id="heo:C694_03820"/>
<dbReference type="KEGG" id="hpy:HP_0743"/>
<dbReference type="PATRIC" id="fig|85962.47.peg.792"/>
<dbReference type="eggNOG" id="COG0772">
    <property type="taxonomic scope" value="Bacteria"/>
</dbReference>
<dbReference type="InParanoid" id="P56098"/>
<dbReference type="OrthoDB" id="9768187at2"/>
<dbReference type="PhylomeDB" id="P56098"/>
<dbReference type="UniPathway" id="UPA00219"/>
<dbReference type="Proteomes" id="UP000000429">
    <property type="component" value="Chromosome"/>
</dbReference>
<dbReference type="GO" id="GO:0032153">
    <property type="term" value="C:cell division site"/>
    <property type="evidence" value="ECO:0000318"/>
    <property type="project" value="GO_Central"/>
</dbReference>
<dbReference type="GO" id="GO:0005886">
    <property type="term" value="C:plasma membrane"/>
    <property type="evidence" value="ECO:0000318"/>
    <property type="project" value="GO_Central"/>
</dbReference>
<dbReference type="GO" id="GO:0015648">
    <property type="term" value="F:lipid-linked peptidoglycan transporter activity"/>
    <property type="evidence" value="ECO:0000318"/>
    <property type="project" value="GO_Central"/>
</dbReference>
<dbReference type="GO" id="GO:0008955">
    <property type="term" value="F:peptidoglycan glycosyltransferase activity"/>
    <property type="evidence" value="ECO:0007669"/>
    <property type="project" value="UniProtKB-UniRule"/>
</dbReference>
<dbReference type="GO" id="GO:0051301">
    <property type="term" value="P:cell division"/>
    <property type="evidence" value="ECO:0000318"/>
    <property type="project" value="GO_Central"/>
</dbReference>
<dbReference type="GO" id="GO:0071555">
    <property type="term" value="P:cell wall organization"/>
    <property type="evidence" value="ECO:0007669"/>
    <property type="project" value="UniProtKB-KW"/>
</dbReference>
<dbReference type="GO" id="GO:0009252">
    <property type="term" value="P:peptidoglycan biosynthetic process"/>
    <property type="evidence" value="ECO:0007669"/>
    <property type="project" value="UniProtKB-UniRule"/>
</dbReference>
<dbReference type="GO" id="GO:0008360">
    <property type="term" value="P:regulation of cell shape"/>
    <property type="evidence" value="ECO:0000318"/>
    <property type="project" value="GO_Central"/>
</dbReference>
<dbReference type="HAMAP" id="MF_02079">
    <property type="entry name" value="PGT_RodA"/>
    <property type="match status" value="1"/>
</dbReference>
<dbReference type="InterPro" id="IPR018365">
    <property type="entry name" value="Cell_cycle_FtsW-rel_CS"/>
</dbReference>
<dbReference type="InterPro" id="IPR001182">
    <property type="entry name" value="FtsW/RodA"/>
</dbReference>
<dbReference type="InterPro" id="IPR011923">
    <property type="entry name" value="RodA/MrdB"/>
</dbReference>
<dbReference type="PANTHER" id="PTHR30474">
    <property type="entry name" value="CELL CYCLE PROTEIN"/>
    <property type="match status" value="1"/>
</dbReference>
<dbReference type="PANTHER" id="PTHR30474:SF1">
    <property type="entry name" value="PEPTIDOGLYCAN GLYCOSYLTRANSFERASE MRDB"/>
    <property type="match status" value="1"/>
</dbReference>
<dbReference type="Pfam" id="PF01098">
    <property type="entry name" value="FTSW_RODA_SPOVE"/>
    <property type="match status" value="1"/>
</dbReference>
<dbReference type="PROSITE" id="PS00428">
    <property type="entry name" value="FTSW_RODA_SPOVE"/>
    <property type="match status" value="1"/>
</dbReference>
<protein>
    <recommendedName>
        <fullName evidence="1">Peptidoglycan glycosyltransferase MrdB</fullName>
        <shortName evidence="1">PGT</shortName>
        <ecNumber evidence="1">2.4.99.28</ecNumber>
    </recommendedName>
    <alternativeName>
        <fullName evidence="1">Cell elongation protein RodA</fullName>
    </alternativeName>
    <alternativeName>
        <fullName evidence="1">Cell wall polymerase</fullName>
    </alternativeName>
    <alternativeName>
        <fullName evidence="1">Peptidoglycan polymerase</fullName>
        <shortName evidence="1">PG polymerase</shortName>
    </alternativeName>
</protein>
<comment type="function">
    <text evidence="1">Peptidoglycan polymerase that is essential for cell wall elongation.</text>
</comment>
<comment type="catalytic activity">
    <reaction evidence="1">
        <text>[GlcNAc-(1-&gt;4)-Mur2Ac(oyl-L-Ala-gamma-D-Glu-L-Lys-D-Ala-D-Ala)](n)-di-trans,octa-cis-undecaprenyl diphosphate + beta-D-GlcNAc-(1-&gt;4)-Mur2Ac(oyl-L-Ala-gamma-D-Glu-L-Lys-D-Ala-D-Ala)-di-trans,octa-cis-undecaprenyl diphosphate = [GlcNAc-(1-&gt;4)-Mur2Ac(oyl-L-Ala-gamma-D-Glu-L-Lys-D-Ala-D-Ala)](n+1)-di-trans,octa-cis-undecaprenyl diphosphate + di-trans,octa-cis-undecaprenyl diphosphate + H(+)</text>
        <dbReference type="Rhea" id="RHEA:23708"/>
        <dbReference type="Rhea" id="RHEA-COMP:9602"/>
        <dbReference type="Rhea" id="RHEA-COMP:9603"/>
        <dbReference type="ChEBI" id="CHEBI:15378"/>
        <dbReference type="ChEBI" id="CHEBI:58405"/>
        <dbReference type="ChEBI" id="CHEBI:60033"/>
        <dbReference type="ChEBI" id="CHEBI:78435"/>
        <dbReference type="EC" id="2.4.99.28"/>
    </reaction>
</comment>
<comment type="pathway">
    <text evidence="1">Cell wall biogenesis; peptidoglycan biosynthesis.</text>
</comment>
<comment type="subcellular location">
    <subcellularLocation>
        <location evidence="1">Cell inner membrane</location>
        <topology evidence="1">Multi-pass membrane protein</topology>
    </subcellularLocation>
</comment>
<comment type="similarity">
    <text evidence="1">Belongs to the SEDS family. MrdB/RodA subfamily.</text>
</comment>
<evidence type="ECO:0000255" key="1">
    <source>
        <dbReference type="HAMAP-Rule" id="MF_02079"/>
    </source>
</evidence>
<keyword id="KW-0997">Cell inner membrane</keyword>
<keyword id="KW-1003">Cell membrane</keyword>
<keyword id="KW-0133">Cell shape</keyword>
<keyword id="KW-0961">Cell wall biogenesis/degradation</keyword>
<keyword id="KW-0328">Glycosyltransferase</keyword>
<keyword id="KW-0472">Membrane</keyword>
<keyword id="KW-0573">Peptidoglycan synthesis</keyword>
<keyword id="KW-1185">Reference proteome</keyword>
<keyword id="KW-0808">Transferase</keyword>
<keyword id="KW-0812">Transmembrane</keyword>
<keyword id="KW-1133">Transmembrane helix</keyword>
<gene>
    <name evidence="1" type="primary">mrdB</name>
    <name type="synonym">rodA</name>
    <name type="ordered locus">HP_0743</name>
</gene>
<feature type="chain" id="PRO_0000062718" description="Peptidoglycan glycosyltransferase MrdB">
    <location>
        <begin position="1"/>
        <end position="381"/>
    </location>
</feature>
<feature type="transmembrane region" description="Helical" evidence="1">
    <location>
        <begin position="11"/>
        <end position="31"/>
    </location>
</feature>
<feature type="transmembrane region" description="Helical" evidence="1">
    <location>
        <begin position="40"/>
        <end position="60"/>
    </location>
</feature>
<feature type="transmembrane region" description="Helical" evidence="1">
    <location>
        <begin position="66"/>
        <end position="86"/>
    </location>
</feature>
<feature type="transmembrane region" description="Helical" evidence="1">
    <location>
        <begin position="99"/>
        <end position="119"/>
    </location>
</feature>
<feature type="transmembrane region" description="Helical" evidence="1">
    <location>
        <begin position="132"/>
        <end position="152"/>
    </location>
</feature>
<feature type="transmembrane region" description="Helical" evidence="1">
    <location>
        <begin position="156"/>
        <end position="176"/>
    </location>
</feature>
<feature type="transmembrane region" description="Helical" evidence="1">
    <location>
        <begin position="180"/>
        <end position="200"/>
    </location>
</feature>
<feature type="transmembrane region" description="Helical" evidence="1">
    <location>
        <begin position="263"/>
        <end position="283"/>
    </location>
</feature>
<feature type="transmembrane region" description="Helical" evidence="1">
    <location>
        <begin position="297"/>
        <end position="317"/>
    </location>
</feature>
<feature type="transmembrane region" description="Helical" evidence="1">
    <location>
        <begin position="328"/>
        <end position="348"/>
    </location>
</feature>
<name>RODA_HELPY</name>
<reference key="1">
    <citation type="journal article" date="1997" name="Nature">
        <title>The complete genome sequence of the gastric pathogen Helicobacter pylori.</title>
        <authorList>
            <person name="Tomb J.-F."/>
            <person name="White O."/>
            <person name="Kerlavage A.R."/>
            <person name="Clayton R.A."/>
            <person name="Sutton G.G."/>
            <person name="Fleischmann R.D."/>
            <person name="Ketchum K.A."/>
            <person name="Klenk H.-P."/>
            <person name="Gill S.R."/>
            <person name="Dougherty B.A."/>
            <person name="Nelson K.E."/>
            <person name="Quackenbush J."/>
            <person name="Zhou L."/>
            <person name="Kirkness E.F."/>
            <person name="Peterson S.N."/>
            <person name="Loftus B.J."/>
            <person name="Richardson D.L."/>
            <person name="Dodson R.J."/>
            <person name="Khalak H.G."/>
            <person name="Glodek A."/>
            <person name="McKenney K."/>
            <person name="FitzGerald L.M."/>
            <person name="Lee N."/>
            <person name="Adams M.D."/>
            <person name="Hickey E.K."/>
            <person name="Berg D.E."/>
            <person name="Gocayne J.D."/>
            <person name="Utterback T.R."/>
            <person name="Peterson J.D."/>
            <person name="Kelley J.M."/>
            <person name="Cotton M.D."/>
            <person name="Weidman J.F."/>
            <person name="Fujii C."/>
            <person name="Bowman C."/>
            <person name="Watthey L."/>
            <person name="Wallin E."/>
            <person name="Hayes W.S."/>
            <person name="Borodovsky M."/>
            <person name="Karp P.D."/>
            <person name="Smith H.O."/>
            <person name="Fraser C.M."/>
            <person name="Venter J.C."/>
        </authorList>
    </citation>
    <scope>NUCLEOTIDE SEQUENCE [LARGE SCALE GENOMIC DNA]</scope>
    <source>
        <strain>ATCC 700392 / 26695</strain>
    </source>
</reference>
<organism>
    <name type="scientific">Helicobacter pylori (strain ATCC 700392 / 26695)</name>
    <name type="common">Campylobacter pylori</name>
    <dbReference type="NCBI Taxonomy" id="85962"/>
    <lineage>
        <taxon>Bacteria</taxon>
        <taxon>Pseudomonadati</taxon>
        <taxon>Campylobacterota</taxon>
        <taxon>Epsilonproteobacteria</taxon>
        <taxon>Campylobacterales</taxon>
        <taxon>Helicobacteraceae</taxon>
        <taxon>Helicobacter</taxon>
    </lineage>
</organism>
<proteinExistence type="inferred from homology"/>
<accession>P56098</accession>
<sequence length="381" mass="43136">MALDKRIWMHFDLLPFVFIIPLLVVSFLLIFESSAVLSLKQGVYYAIGFILFWIVFFIPFRKLGRWLFVFYWACVILLALVDFMGYSKLGAQRWLVIPFISITLQPSEPVKIAILLLLAHLIKINPPPFKGYDWGMFLKLSFYICLPAALILKQPDLGTALIVLIMGFGILLIVGLRTRVWLPLFIALLVASPIAYHFLHDYQKKRIADFLSEKPNYHVMQSIIAIGSGGFLGKSKEACTQTKFKFLPIATSDFIFAYFVERFGFLGAMLLFAIYIGLSLHLFFYLFESNSDWFLKIVALGISILIFVYSSVNIAMTLGLAPVVGIPLPLFSYGGSSFITFMILFGILENLLAFRYIFGYNSKPSFGNFGFLAQLVRALGS</sequence>